<organism>
    <name type="scientific">Nitratidesulfovibrio vulgaris (strain ATCC 29579 / DSM 644 / CCUG 34227 / NCIMB 8303 / VKM B-1760 / Hildenborough)</name>
    <name type="common">Desulfovibrio vulgaris</name>
    <dbReference type="NCBI Taxonomy" id="882"/>
    <lineage>
        <taxon>Bacteria</taxon>
        <taxon>Pseudomonadati</taxon>
        <taxon>Thermodesulfobacteriota</taxon>
        <taxon>Desulfovibrionia</taxon>
        <taxon>Desulfovibrionales</taxon>
        <taxon>Desulfovibrionaceae</taxon>
        <taxon>Nitratidesulfovibrio</taxon>
    </lineage>
</organism>
<feature type="chain" id="PRO_0000108819" description="Phospho-N-acetylmuramoyl-pentapeptide-transferase">
    <location>
        <begin position="1"/>
        <end position="358"/>
    </location>
</feature>
<feature type="transmembrane region" description="Helical" evidence="1">
    <location>
        <begin position="28"/>
        <end position="48"/>
    </location>
</feature>
<feature type="transmembrane region" description="Helical" evidence="1">
    <location>
        <begin position="72"/>
        <end position="92"/>
    </location>
</feature>
<feature type="transmembrane region" description="Helical" evidence="1">
    <location>
        <begin position="96"/>
        <end position="116"/>
    </location>
</feature>
<feature type="transmembrane region" description="Helical" evidence="1">
    <location>
        <begin position="133"/>
        <end position="153"/>
    </location>
</feature>
<feature type="transmembrane region" description="Helical" evidence="1">
    <location>
        <begin position="164"/>
        <end position="184"/>
    </location>
</feature>
<feature type="transmembrane region" description="Helical" evidence="1">
    <location>
        <begin position="196"/>
        <end position="216"/>
    </location>
</feature>
<feature type="transmembrane region" description="Helical" evidence="1">
    <location>
        <begin position="233"/>
        <end position="253"/>
    </location>
</feature>
<feature type="transmembrane region" description="Helical" evidence="1">
    <location>
        <begin position="260"/>
        <end position="280"/>
    </location>
</feature>
<feature type="transmembrane region" description="Helical" evidence="1">
    <location>
        <begin position="285"/>
        <end position="305"/>
    </location>
</feature>
<feature type="transmembrane region" description="Helical" evidence="1">
    <location>
        <begin position="335"/>
        <end position="355"/>
    </location>
</feature>
<proteinExistence type="inferred from homology"/>
<keyword id="KW-0131">Cell cycle</keyword>
<keyword id="KW-0132">Cell division</keyword>
<keyword id="KW-0997">Cell inner membrane</keyword>
<keyword id="KW-1003">Cell membrane</keyword>
<keyword id="KW-0133">Cell shape</keyword>
<keyword id="KW-0961">Cell wall biogenesis/degradation</keyword>
<keyword id="KW-0460">Magnesium</keyword>
<keyword id="KW-0472">Membrane</keyword>
<keyword id="KW-0479">Metal-binding</keyword>
<keyword id="KW-0573">Peptidoglycan synthesis</keyword>
<keyword id="KW-1185">Reference proteome</keyword>
<keyword id="KW-0808">Transferase</keyword>
<keyword id="KW-0812">Transmembrane</keyword>
<keyword id="KW-1133">Transmembrane helix</keyword>
<gene>
    <name evidence="1" type="primary">mraY</name>
    <name type="ordered locus">DVU_2507</name>
</gene>
<accession>Q728U5</accession>
<protein>
    <recommendedName>
        <fullName evidence="1">Phospho-N-acetylmuramoyl-pentapeptide-transferase</fullName>
        <ecNumber evidence="1">2.7.8.13</ecNumber>
    </recommendedName>
    <alternativeName>
        <fullName evidence="1">UDP-MurNAc-pentapeptide phosphotransferase</fullName>
    </alternativeName>
</protein>
<dbReference type="EC" id="2.7.8.13" evidence="1"/>
<dbReference type="EMBL" id="AE017285">
    <property type="protein sequence ID" value="AAS96979.1"/>
    <property type="molecule type" value="Genomic_DNA"/>
</dbReference>
<dbReference type="RefSeq" id="WP_010939777.1">
    <property type="nucleotide sequence ID" value="NC_002937.3"/>
</dbReference>
<dbReference type="RefSeq" id="YP_011719.1">
    <property type="nucleotide sequence ID" value="NC_002937.3"/>
</dbReference>
<dbReference type="SMR" id="Q728U5"/>
<dbReference type="STRING" id="882.DVU_2507"/>
<dbReference type="PaxDb" id="882-DVU_2507"/>
<dbReference type="EnsemblBacteria" id="AAS96979">
    <property type="protein sequence ID" value="AAS96979"/>
    <property type="gene ID" value="DVU_2507"/>
</dbReference>
<dbReference type="KEGG" id="dvu:DVU_2507"/>
<dbReference type="PATRIC" id="fig|882.5.peg.2267"/>
<dbReference type="eggNOG" id="COG0472">
    <property type="taxonomic scope" value="Bacteria"/>
</dbReference>
<dbReference type="HOGENOM" id="CLU_023982_0_0_7"/>
<dbReference type="OrthoDB" id="9805475at2"/>
<dbReference type="PhylomeDB" id="Q728U5"/>
<dbReference type="UniPathway" id="UPA00219"/>
<dbReference type="Proteomes" id="UP000002194">
    <property type="component" value="Chromosome"/>
</dbReference>
<dbReference type="GO" id="GO:0005886">
    <property type="term" value="C:plasma membrane"/>
    <property type="evidence" value="ECO:0007669"/>
    <property type="project" value="UniProtKB-SubCell"/>
</dbReference>
<dbReference type="GO" id="GO:0046872">
    <property type="term" value="F:metal ion binding"/>
    <property type="evidence" value="ECO:0007669"/>
    <property type="project" value="UniProtKB-KW"/>
</dbReference>
<dbReference type="GO" id="GO:0008963">
    <property type="term" value="F:phospho-N-acetylmuramoyl-pentapeptide-transferase activity"/>
    <property type="evidence" value="ECO:0007669"/>
    <property type="project" value="UniProtKB-UniRule"/>
</dbReference>
<dbReference type="GO" id="GO:0051992">
    <property type="term" value="F:UDP-N-acetylmuramoyl-L-alanyl-D-glutamyl-meso-2,6-diaminopimelyl-D-alanyl-D-alanine:undecaprenyl-phosphate transferase activity"/>
    <property type="evidence" value="ECO:0007669"/>
    <property type="project" value="RHEA"/>
</dbReference>
<dbReference type="GO" id="GO:0051301">
    <property type="term" value="P:cell division"/>
    <property type="evidence" value="ECO:0007669"/>
    <property type="project" value="UniProtKB-KW"/>
</dbReference>
<dbReference type="GO" id="GO:0071555">
    <property type="term" value="P:cell wall organization"/>
    <property type="evidence" value="ECO:0007669"/>
    <property type="project" value="UniProtKB-KW"/>
</dbReference>
<dbReference type="GO" id="GO:0009252">
    <property type="term" value="P:peptidoglycan biosynthetic process"/>
    <property type="evidence" value="ECO:0007669"/>
    <property type="project" value="UniProtKB-UniRule"/>
</dbReference>
<dbReference type="GO" id="GO:0008360">
    <property type="term" value="P:regulation of cell shape"/>
    <property type="evidence" value="ECO:0007669"/>
    <property type="project" value="UniProtKB-KW"/>
</dbReference>
<dbReference type="CDD" id="cd06852">
    <property type="entry name" value="GT_MraY"/>
    <property type="match status" value="1"/>
</dbReference>
<dbReference type="HAMAP" id="MF_00038">
    <property type="entry name" value="MraY"/>
    <property type="match status" value="1"/>
</dbReference>
<dbReference type="InterPro" id="IPR000715">
    <property type="entry name" value="Glycosyl_transferase_4"/>
</dbReference>
<dbReference type="InterPro" id="IPR003524">
    <property type="entry name" value="PNAcMuramoyl-5peptid_Trfase"/>
</dbReference>
<dbReference type="InterPro" id="IPR018480">
    <property type="entry name" value="PNAcMuramoyl-5peptid_Trfase_CS"/>
</dbReference>
<dbReference type="NCBIfam" id="TIGR00445">
    <property type="entry name" value="mraY"/>
    <property type="match status" value="1"/>
</dbReference>
<dbReference type="PANTHER" id="PTHR22926">
    <property type="entry name" value="PHOSPHO-N-ACETYLMURAMOYL-PENTAPEPTIDE-TRANSFERASE"/>
    <property type="match status" value="1"/>
</dbReference>
<dbReference type="PANTHER" id="PTHR22926:SF5">
    <property type="entry name" value="PHOSPHO-N-ACETYLMURAMOYL-PENTAPEPTIDE-TRANSFERASE HOMOLOG"/>
    <property type="match status" value="1"/>
</dbReference>
<dbReference type="Pfam" id="PF00953">
    <property type="entry name" value="Glycos_transf_4"/>
    <property type="match status" value="1"/>
</dbReference>
<dbReference type="Pfam" id="PF10555">
    <property type="entry name" value="MraY_sig1"/>
    <property type="match status" value="1"/>
</dbReference>
<dbReference type="PROSITE" id="PS01348">
    <property type="entry name" value="MRAY_2"/>
    <property type="match status" value="1"/>
</dbReference>
<comment type="function">
    <text evidence="1">Catalyzes the initial step of the lipid cycle reactions in the biosynthesis of the cell wall peptidoglycan: transfers peptidoglycan precursor phospho-MurNAc-pentapeptide from UDP-MurNAc-pentapeptide onto the lipid carrier undecaprenyl phosphate, yielding undecaprenyl-pyrophosphoryl-MurNAc-pentapeptide, known as lipid I.</text>
</comment>
<comment type="catalytic activity">
    <reaction evidence="1">
        <text>UDP-N-acetyl-alpha-D-muramoyl-L-alanyl-gamma-D-glutamyl-meso-2,6-diaminopimeloyl-D-alanyl-D-alanine + di-trans,octa-cis-undecaprenyl phosphate = di-trans,octa-cis-undecaprenyl diphospho-N-acetyl-alpha-D-muramoyl-L-alanyl-D-glutamyl-meso-2,6-diaminopimeloyl-D-alanyl-D-alanine + UMP</text>
        <dbReference type="Rhea" id="RHEA:28386"/>
        <dbReference type="ChEBI" id="CHEBI:57865"/>
        <dbReference type="ChEBI" id="CHEBI:60392"/>
        <dbReference type="ChEBI" id="CHEBI:61386"/>
        <dbReference type="ChEBI" id="CHEBI:61387"/>
        <dbReference type="EC" id="2.7.8.13"/>
    </reaction>
</comment>
<comment type="cofactor">
    <cofactor evidence="1">
        <name>Mg(2+)</name>
        <dbReference type="ChEBI" id="CHEBI:18420"/>
    </cofactor>
</comment>
<comment type="pathway">
    <text evidence="1">Cell wall biogenesis; peptidoglycan biosynthesis.</text>
</comment>
<comment type="subcellular location">
    <subcellularLocation>
        <location evidence="1">Cell inner membrane</location>
        <topology evidence="1">Multi-pass membrane protein</topology>
    </subcellularLocation>
</comment>
<comment type="similarity">
    <text evidence="1">Belongs to the glycosyltransferase 4 family. MraY subfamily.</text>
</comment>
<name>MRAY_NITV2</name>
<evidence type="ECO:0000255" key="1">
    <source>
        <dbReference type="HAMAP-Rule" id="MF_00038"/>
    </source>
</evidence>
<reference key="1">
    <citation type="journal article" date="2004" name="Nat. Biotechnol.">
        <title>The genome sequence of the anaerobic, sulfate-reducing bacterium Desulfovibrio vulgaris Hildenborough.</title>
        <authorList>
            <person name="Heidelberg J.F."/>
            <person name="Seshadri R."/>
            <person name="Haveman S.A."/>
            <person name="Hemme C.L."/>
            <person name="Paulsen I.T."/>
            <person name="Kolonay J.F."/>
            <person name="Eisen J.A."/>
            <person name="Ward N.L."/>
            <person name="Methe B.A."/>
            <person name="Brinkac L.M."/>
            <person name="Daugherty S.C."/>
            <person name="DeBoy R.T."/>
            <person name="Dodson R.J."/>
            <person name="Durkin A.S."/>
            <person name="Madupu R."/>
            <person name="Nelson W.C."/>
            <person name="Sullivan S.A."/>
            <person name="Fouts D.E."/>
            <person name="Haft D.H."/>
            <person name="Selengut J."/>
            <person name="Peterson J.D."/>
            <person name="Davidsen T.M."/>
            <person name="Zafar N."/>
            <person name="Zhou L."/>
            <person name="Radune D."/>
            <person name="Dimitrov G."/>
            <person name="Hance M."/>
            <person name="Tran K."/>
            <person name="Khouri H.M."/>
            <person name="Gill J."/>
            <person name="Utterback T.R."/>
            <person name="Feldblyum T.V."/>
            <person name="Wall J.D."/>
            <person name="Voordouw G."/>
            <person name="Fraser C.M."/>
        </authorList>
    </citation>
    <scope>NUCLEOTIDE SEQUENCE [LARGE SCALE GENOMIC DNA]</scope>
    <source>
        <strain>ATCC 29579 / DSM 644 / CCUG 34227 / NCIMB 8303 / VKM B-1760 / Hildenborough</strain>
    </source>
</reference>
<sequence>MLYNLLYPLSSDITVFNVFRYITFRSAWALATALLVSIVVGPRFIAWLQRLKCRQFIHEDVTCHMSKAGTPTMGGLLIGFAVTFSVLLWADLRNPYIWLTLLVFTGFGFIGFLDDYTKLRRRNNKGLTASAKFLWQVGVAVAAMYLLVQLPAYSTKLAFPFFKGLTPDLGWLYIPFAVAVMVGSSNGVNLTDGLDGLAIGPTIVAGIVFSIFIYVAGHSQIAGYLQVPYVPGVGEVAVFCGALVGAGLGFLWFNAYPAQVFMGDVGSLSLGGTLGFLAVLCKQELLLLVVGGLFVVETLSVILQVGYFKFSGGKRIFRMAPLHHHFELQGIPESKIIIRFWITSALLGLIALSVLKLR</sequence>